<feature type="signal peptide" evidence="1 5">
    <location>
        <begin position="1"/>
        <end position="22"/>
    </location>
</feature>
<feature type="propeptide" id="PRO_0000361702" evidence="3">
    <location>
        <begin position="23"/>
        <end position="49"/>
    </location>
</feature>
<feature type="peptide" id="PRO_0000361703" description="Fallaxidin-3.1">
    <location>
        <begin position="50"/>
        <end position="65"/>
    </location>
</feature>
<feature type="propeptide" id="PRO_0000361704" evidence="3">
    <location>
        <begin position="69"/>
        <end position="73"/>
    </location>
</feature>
<feature type="peptide" id="PRO_0000361705" description="Fallaxidin-3.2">
    <location>
        <begin position="74"/>
        <end position="89"/>
    </location>
</feature>
<feature type="region of interest" description="Disordered" evidence="2">
    <location>
        <begin position="24"/>
        <end position="49"/>
    </location>
</feature>
<feature type="compositionally biased region" description="Acidic residues" evidence="2">
    <location>
        <begin position="31"/>
        <end position="41"/>
    </location>
</feature>
<feature type="modified residue" description="Leucine amide" evidence="3">
    <location>
        <position position="65"/>
    </location>
</feature>
<feature type="modified residue" description="Leucine amide" evidence="3">
    <location>
        <position position="89"/>
    </location>
</feature>
<organism>
    <name type="scientific">Litoria fallax</name>
    <name type="common">Eastern dwarf tree frog</name>
    <name type="synonym">Hylomantis fallax</name>
    <dbReference type="NCBI Taxonomy" id="115422"/>
    <lineage>
        <taxon>Eukaryota</taxon>
        <taxon>Metazoa</taxon>
        <taxon>Chordata</taxon>
        <taxon>Craniata</taxon>
        <taxon>Vertebrata</taxon>
        <taxon>Euteleostomi</taxon>
        <taxon>Amphibia</taxon>
        <taxon>Batrachia</taxon>
        <taxon>Anura</taxon>
        <taxon>Neobatrachia</taxon>
        <taxon>Hyloidea</taxon>
        <taxon>Hylidae</taxon>
        <taxon>Pelodryadinae</taxon>
        <taxon>Litoria</taxon>
    </lineage>
</organism>
<comment type="function">
    <text evidence="3">Fallaxidin-3.1 shows antibacterial activity against the Gram-positive bacteria E.faecalis (MIC=100 uM) and L.lactis (MIC=100 uM). No antibacterial activity against the Gram-positive bacteria B.cereus, L.innocua, M.luteus, S.epidermidis, S.uberis and S.aureus, or the Gram-negative bacteria E.cloacae and E.coli.</text>
</comment>
<comment type="function">
    <text evidence="3">Fallaxidin-3.2 shows antibacterial activity against the Gram-positive bacteria E.faecalis (MIC=100 uM) and L.lactis (MIC=500 uM). No antibacterial activity against the Gram-positive bacteria B.cereus, L.innocua, M.luteus, S.epidermidis, S.uberis and S.aureus, or the Gram-negative bacteria E.cloacae and E.coli.</text>
</comment>
<comment type="subcellular location">
    <subcellularLocation>
        <location evidence="3">Secreted</location>
    </subcellularLocation>
</comment>
<comment type="tissue specificity">
    <text evidence="3">Expressed by the skin glands.</text>
</comment>
<comment type="mass spectrometry" mass="1646.0" method="Electrospray" evidence="3">
    <molecule>Fallaxidin-3.1</molecule>
    <text>The measured mass is that of Fallaxidin-3.1.</text>
</comment>
<comment type="mass spectrometry" mass="1678.0" method="Electrospray" evidence="3">
    <molecule>Fallaxidin-3.2</molecule>
    <text>The measured mass is that of Fallaxidin-3.2.</text>
</comment>
<comment type="similarity">
    <text evidence="1">Belongs to the frog skin active peptide (FSAP) family. Dermaseptin subfamily.</text>
</comment>
<evidence type="ECO:0000255" key="1"/>
<evidence type="ECO:0000256" key="2">
    <source>
        <dbReference type="SAM" id="MobiDB-lite"/>
    </source>
</evidence>
<evidence type="ECO:0000269" key="3">
    <source>
    </source>
</evidence>
<evidence type="ECO:0000303" key="4">
    <source>
    </source>
</evidence>
<evidence type="ECO:0000312" key="5">
    <source>
        <dbReference type="EMBL" id="ACH53446.1"/>
    </source>
</evidence>
<sequence length="91" mass="10133">MASLKKSLFLVLFLGLVSLSICEKEKRENEGNENEEEEENHEEGSEEKRGLLDLAKHVIGIASKLGKRSEEKRGLLDFAKHVIGIASKLGK</sequence>
<name>FALX2_LITFA</name>
<proteinExistence type="evidence at protein level"/>
<dbReference type="EMBL" id="EU912528">
    <property type="protein sequence ID" value="ACH53446.1"/>
    <property type="molecule type" value="mRNA"/>
</dbReference>
<dbReference type="GO" id="GO:0005576">
    <property type="term" value="C:extracellular region"/>
    <property type="evidence" value="ECO:0000314"/>
    <property type="project" value="UniProtKB"/>
</dbReference>
<dbReference type="GO" id="GO:0050830">
    <property type="term" value="P:defense response to Gram-positive bacterium"/>
    <property type="evidence" value="ECO:0000314"/>
    <property type="project" value="UniProtKB"/>
</dbReference>
<dbReference type="InterPro" id="IPR004275">
    <property type="entry name" value="Frog_antimicrobial_propeptide"/>
</dbReference>
<dbReference type="Pfam" id="PF03032">
    <property type="entry name" value="FSAP_sig_propep"/>
    <property type="match status" value="1"/>
</dbReference>
<protein>
    <recommendedName>
        <fullName evidence="4 5">Preprofallaxidin-2</fullName>
    </recommendedName>
    <component>
        <recommendedName>
            <fullName>Fallaxidin-3.1</fullName>
        </recommendedName>
    </component>
    <component>
        <recommendedName>
            <fullName>Fallaxidin-3.2</fullName>
        </recommendedName>
    </component>
</protein>
<reference evidence="5" key="1">
    <citation type="journal article" date="2008" name="Rapid Commun. Mass Spectrom.">
        <title>The fallaxidin peptides from the skin secretion of the eastern dwarf tree frog Litoria fallax. Sequence determination by positive and negative ion electrospray mass spectrometry: antimicrobial activity and cDNA cloning of the fallaxidins.</title>
        <authorList>
            <person name="Jackway R.J."/>
            <person name="Bowie J.H."/>
            <person name="Bilusich D."/>
            <person name="Musgrave I.F."/>
            <person name="Surinya-Johnson K.H."/>
            <person name="Tyler M.J."/>
            <person name="Eichinger P.C.H."/>
        </authorList>
    </citation>
    <scope>NUCLEOTIDE SEQUENCE [MRNA]</scope>
    <scope>PROTEIN SEQUENCE OF 50-65 AND 74-89</scope>
    <scope>FUNCTION</scope>
    <scope>SUBCELLULAR LOCATION</scope>
    <scope>TISSUE SPECIFICITY</scope>
    <scope>MASS SPECTROMETRY</scope>
    <scope>AMIDATION AT LEU-65 AND LEU-89</scope>
    <source>
        <tissue evidence="5">Skin</tissue>
        <tissue evidence="3">Skin secretion</tissue>
    </source>
</reference>
<keyword id="KW-0027">Amidation</keyword>
<keyword id="KW-0878">Amphibian defense peptide</keyword>
<keyword id="KW-0044">Antibiotic</keyword>
<keyword id="KW-0929">Antimicrobial</keyword>
<keyword id="KW-0903">Direct protein sequencing</keyword>
<keyword id="KW-0964">Secreted</keyword>
<keyword id="KW-0732">Signal</keyword>
<accession>B5LUQ3</accession>